<reference key="1">
    <citation type="submission" date="2007-03" db="EMBL/GenBank/DDBJ databases">
        <authorList>
            <person name="Heidelberg J."/>
        </authorList>
    </citation>
    <scope>NUCLEOTIDE SEQUENCE [LARGE SCALE GENOMIC DNA]</scope>
    <source>
        <strain>ATCC 39541 / Classical Ogawa 395 / O395</strain>
    </source>
</reference>
<reference key="2">
    <citation type="journal article" date="2008" name="PLoS ONE">
        <title>A recalibrated molecular clock and independent origins for the cholera pandemic clones.</title>
        <authorList>
            <person name="Feng L."/>
            <person name="Reeves P.R."/>
            <person name="Lan R."/>
            <person name="Ren Y."/>
            <person name="Gao C."/>
            <person name="Zhou Z."/>
            <person name="Ren Y."/>
            <person name="Cheng J."/>
            <person name="Wang W."/>
            <person name="Wang J."/>
            <person name="Qian W."/>
            <person name="Li D."/>
            <person name="Wang L."/>
        </authorList>
    </citation>
    <scope>NUCLEOTIDE SEQUENCE [LARGE SCALE GENOMIC DNA]</scope>
    <source>
        <strain>ATCC 39541 / Classical Ogawa 395 / O395</strain>
    </source>
</reference>
<dbReference type="EC" id="2.7.7.8" evidence="1"/>
<dbReference type="EMBL" id="CP000627">
    <property type="protein sequence ID" value="ABQ21149.1"/>
    <property type="molecule type" value="Genomic_DNA"/>
</dbReference>
<dbReference type="EMBL" id="CP001235">
    <property type="protein sequence ID" value="ACP08682.1"/>
    <property type="molecule type" value="Genomic_DNA"/>
</dbReference>
<dbReference type="RefSeq" id="WP_000462069.1">
    <property type="nucleotide sequence ID" value="NZ_JAACZH010000006.1"/>
</dbReference>
<dbReference type="SMR" id="A5F913"/>
<dbReference type="KEGG" id="vco:VC0395_A0178"/>
<dbReference type="KEGG" id="vcr:VC395_0664"/>
<dbReference type="PATRIC" id="fig|345073.21.peg.645"/>
<dbReference type="eggNOG" id="COG1185">
    <property type="taxonomic scope" value="Bacteria"/>
</dbReference>
<dbReference type="HOGENOM" id="CLU_004217_2_2_6"/>
<dbReference type="OrthoDB" id="9804305at2"/>
<dbReference type="Proteomes" id="UP000000249">
    <property type="component" value="Chromosome 2"/>
</dbReference>
<dbReference type="GO" id="GO:0005829">
    <property type="term" value="C:cytosol"/>
    <property type="evidence" value="ECO:0007669"/>
    <property type="project" value="TreeGrafter"/>
</dbReference>
<dbReference type="GO" id="GO:0000175">
    <property type="term" value="F:3'-5'-RNA exonuclease activity"/>
    <property type="evidence" value="ECO:0007669"/>
    <property type="project" value="TreeGrafter"/>
</dbReference>
<dbReference type="GO" id="GO:0000287">
    <property type="term" value="F:magnesium ion binding"/>
    <property type="evidence" value="ECO:0007669"/>
    <property type="project" value="UniProtKB-UniRule"/>
</dbReference>
<dbReference type="GO" id="GO:0004654">
    <property type="term" value="F:polyribonucleotide nucleotidyltransferase activity"/>
    <property type="evidence" value="ECO:0007669"/>
    <property type="project" value="UniProtKB-UniRule"/>
</dbReference>
<dbReference type="GO" id="GO:0003723">
    <property type="term" value="F:RNA binding"/>
    <property type="evidence" value="ECO:0007669"/>
    <property type="project" value="UniProtKB-UniRule"/>
</dbReference>
<dbReference type="GO" id="GO:0006402">
    <property type="term" value="P:mRNA catabolic process"/>
    <property type="evidence" value="ECO:0007669"/>
    <property type="project" value="UniProtKB-UniRule"/>
</dbReference>
<dbReference type="GO" id="GO:0006396">
    <property type="term" value="P:RNA processing"/>
    <property type="evidence" value="ECO:0007669"/>
    <property type="project" value="InterPro"/>
</dbReference>
<dbReference type="CDD" id="cd02393">
    <property type="entry name" value="KH-I_PNPase"/>
    <property type="match status" value="1"/>
</dbReference>
<dbReference type="CDD" id="cd11363">
    <property type="entry name" value="RNase_PH_PNPase_1"/>
    <property type="match status" value="1"/>
</dbReference>
<dbReference type="CDD" id="cd11364">
    <property type="entry name" value="RNase_PH_PNPase_2"/>
    <property type="match status" value="1"/>
</dbReference>
<dbReference type="CDD" id="cd04472">
    <property type="entry name" value="S1_PNPase"/>
    <property type="match status" value="1"/>
</dbReference>
<dbReference type="FunFam" id="2.40.50.140:FF:000023">
    <property type="entry name" value="Polyribonucleotide nucleotidyltransferase"/>
    <property type="match status" value="1"/>
</dbReference>
<dbReference type="FunFam" id="3.30.1370.10:FF:000001">
    <property type="entry name" value="Polyribonucleotide nucleotidyltransferase"/>
    <property type="match status" value="1"/>
</dbReference>
<dbReference type="FunFam" id="3.30.230.70:FF:000001">
    <property type="entry name" value="Polyribonucleotide nucleotidyltransferase"/>
    <property type="match status" value="1"/>
</dbReference>
<dbReference type="FunFam" id="3.30.230.70:FF:000002">
    <property type="entry name" value="Polyribonucleotide nucleotidyltransferase"/>
    <property type="match status" value="1"/>
</dbReference>
<dbReference type="Gene3D" id="3.30.230.70">
    <property type="entry name" value="GHMP Kinase, N-terminal domain"/>
    <property type="match status" value="2"/>
</dbReference>
<dbReference type="Gene3D" id="3.30.1370.10">
    <property type="entry name" value="K Homology domain, type 1"/>
    <property type="match status" value="1"/>
</dbReference>
<dbReference type="Gene3D" id="2.40.50.140">
    <property type="entry name" value="Nucleic acid-binding proteins"/>
    <property type="match status" value="1"/>
</dbReference>
<dbReference type="HAMAP" id="MF_01595">
    <property type="entry name" value="PNPase"/>
    <property type="match status" value="1"/>
</dbReference>
<dbReference type="InterPro" id="IPR001247">
    <property type="entry name" value="ExoRNase_PH_dom1"/>
</dbReference>
<dbReference type="InterPro" id="IPR015847">
    <property type="entry name" value="ExoRNase_PH_dom2"/>
</dbReference>
<dbReference type="InterPro" id="IPR036345">
    <property type="entry name" value="ExoRNase_PH_dom2_sf"/>
</dbReference>
<dbReference type="InterPro" id="IPR004087">
    <property type="entry name" value="KH_dom"/>
</dbReference>
<dbReference type="InterPro" id="IPR004088">
    <property type="entry name" value="KH_dom_type_1"/>
</dbReference>
<dbReference type="InterPro" id="IPR036612">
    <property type="entry name" value="KH_dom_type_1_sf"/>
</dbReference>
<dbReference type="InterPro" id="IPR012340">
    <property type="entry name" value="NA-bd_OB-fold"/>
</dbReference>
<dbReference type="InterPro" id="IPR012162">
    <property type="entry name" value="PNPase"/>
</dbReference>
<dbReference type="InterPro" id="IPR027408">
    <property type="entry name" value="PNPase/RNase_PH_dom_sf"/>
</dbReference>
<dbReference type="InterPro" id="IPR015848">
    <property type="entry name" value="PNPase_PH_RNA-bd_bac/org-type"/>
</dbReference>
<dbReference type="InterPro" id="IPR020568">
    <property type="entry name" value="Ribosomal_Su5_D2-typ_SF"/>
</dbReference>
<dbReference type="InterPro" id="IPR003029">
    <property type="entry name" value="S1_domain"/>
</dbReference>
<dbReference type="NCBIfam" id="TIGR03591">
    <property type="entry name" value="polynuc_phos"/>
    <property type="match status" value="1"/>
</dbReference>
<dbReference type="NCBIfam" id="NF008805">
    <property type="entry name" value="PRK11824.1"/>
    <property type="match status" value="1"/>
</dbReference>
<dbReference type="PANTHER" id="PTHR11252">
    <property type="entry name" value="POLYRIBONUCLEOTIDE NUCLEOTIDYLTRANSFERASE"/>
    <property type="match status" value="1"/>
</dbReference>
<dbReference type="PANTHER" id="PTHR11252:SF0">
    <property type="entry name" value="POLYRIBONUCLEOTIDE NUCLEOTIDYLTRANSFERASE 1, MITOCHONDRIAL"/>
    <property type="match status" value="1"/>
</dbReference>
<dbReference type="Pfam" id="PF00013">
    <property type="entry name" value="KH_1"/>
    <property type="match status" value="1"/>
</dbReference>
<dbReference type="Pfam" id="PF03726">
    <property type="entry name" value="PNPase"/>
    <property type="match status" value="1"/>
</dbReference>
<dbReference type="Pfam" id="PF01138">
    <property type="entry name" value="RNase_PH"/>
    <property type="match status" value="2"/>
</dbReference>
<dbReference type="Pfam" id="PF03725">
    <property type="entry name" value="RNase_PH_C"/>
    <property type="match status" value="2"/>
</dbReference>
<dbReference type="Pfam" id="PF00575">
    <property type="entry name" value="S1"/>
    <property type="match status" value="1"/>
</dbReference>
<dbReference type="PIRSF" id="PIRSF005499">
    <property type="entry name" value="PNPase"/>
    <property type="match status" value="1"/>
</dbReference>
<dbReference type="SMART" id="SM00322">
    <property type="entry name" value="KH"/>
    <property type="match status" value="1"/>
</dbReference>
<dbReference type="SMART" id="SM00316">
    <property type="entry name" value="S1"/>
    <property type="match status" value="1"/>
</dbReference>
<dbReference type="SUPFAM" id="SSF54791">
    <property type="entry name" value="Eukaryotic type KH-domain (KH-domain type I)"/>
    <property type="match status" value="1"/>
</dbReference>
<dbReference type="SUPFAM" id="SSF50249">
    <property type="entry name" value="Nucleic acid-binding proteins"/>
    <property type="match status" value="1"/>
</dbReference>
<dbReference type="SUPFAM" id="SSF55666">
    <property type="entry name" value="Ribonuclease PH domain 2-like"/>
    <property type="match status" value="2"/>
</dbReference>
<dbReference type="SUPFAM" id="SSF54211">
    <property type="entry name" value="Ribosomal protein S5 domain 2-like"/>
    <property type="match status" value="2"/>
</dbReference>
<dbReference type="PROSITE" id="PS50084">
    <property type="entry name" value="KH_TYPE_1"/>
    <property type="match status" value="1"/>
</dbReference>
<dbReference type="PROSITE" id="PS50126">
    <property type="entry name" value="S1"/>
    <property type="match status" value="1"/>
</dbReference>
<accession>A5F913</accession>
<accession>C3LXV8</accession>
<sequence length="712" mass="76840">MFEKPVVKTFQYGNHTVTLETGVMARQATAAVMATMDDTAVFVSVVGKKEAVVGQDFFPLTVNYQERTYAAGKIPGGFFKREGRPSEGETLIARLIDRPIRPLFPDGFTNEVQVIATVVSVNPDVQPDIISMIGTSAALAISGLPFNGPIGAARVGHIDGQLVLNPSEKELKQSRLDLVVAGTDNAVLMVESEAQILTEEEMLAAVVFGHDQQQAVIKAINEFAAEVATPAWEWVAPAENTELKAKVAALAETRLVEAYQITEKMARYDRIHAISSEVTAALLAENEALDTKEIHTIFHDLEKTVVRRSIIAGNPRIDGREKDMVRALDVRTGVLPRTHGSALFTRGETQALVTATLGTQRDAQIIDELTGEKKDHFLLHYNFPPYCVGETGFVGSPKRREIGHGRLAKRGIAAVMPSPEEFPYTVRVVSEITESNGSSSMASVCGSSLALMDAGVPIKASVAGIAMGLVKEENDFVVLSDILGDEDHLGDMDFKVAGTATGVTALQMDIKIEGITKEIMQIALNQAKGARLHILSVMDQAISAARSDISEFAPRIHTMKISVEKIKDVIGKGGAVIRQLTEETGTTIEIEDDGTIKIAATDGDQAKEAIRRIQEITAEVEVGVIYTGKVARLADFGAFVTILPGKDGLVHISQIADKRVEKVSDYLTEGQEVQVKVLEIDRQGRVRLSMKEAVETSDAAAEVAPQAAPQAE</sequence>
<feature type="chain" id="PRO_0000329928" description="Polyribonucleotide nucleotidyltransferase">
    <location>
        <begin position="1"/>
        <end position="712"/>
    </location>
</feature>
<feature type="domain" description="KH" evidence="1">
    <location>
        <begin position="554"/>
        <end position="613"/>
    </location>
</feature>
<feature type="domain" description="S1 motif" evidence="1">
    <location>
        <begin position="623"/>
        <end position="691"/>
    </location>
</feature>
<feature type="binding site" evidence="1">
    <location>
        <position position="487"/>
    </location>
    <ligand>
        <name>Mg(2+)</name>
        <dbReference type="ChEBI" id="CHEBI:18420"/>
    </ligand>
</feature>
<feature type="binding site" evidence="1">
    <location>
        <position position="493"/>
    </location>
    <ligand>
        <name>Mg(2+)</name>
        <dbReference type="ChEBI" id="CHEBI:18420"/>
    </ligand>
</feature>
<comment type="function">
    <text evidence="1">Involved in mRNA degradation. Catalyzes the phosphorolysis of single-stranded polyribonucleotides processively in the 3'- to 5'-direction.</text>
</comment>
<comment type="catalytic activity">
    <reaction evidence="1">
        <text>RNA(n+1) + phosphate = RNA(n) + a ribonucleoside 5'-diphosphate</text>
        <dbReference type="Rhea" id="RHEA:22096"/>
        <dbReference type="Rhea" id="RHEA-COMP:14527"/>
        <dbReference type="Rhea" id="RHEA-COMP:17342"/>
        <dbReference type="ChEBI" id="CHEBI:43474"/>
        <dbReference type="ChEBI" id="CHEBI:57930"/>
        <dbReference type="ChEBI" id="CHEBI:140395"/>
        <dbReference type="EC" id="2.7.7.8"/>
    </reaction>
</comment>
<comment type="cofactor">
    <cofactor evidence="1">
        <name>Mg(2+)</name>
        <dbReference type="ChEBI" id="CHEBI:18420"/>
    </cofactor>
</comment>
<comment type="subunit">
    <text evidence="1">Component of the RNA degradosome, which is a multiprotein complex involved in RNA processing and mRNA degradation.</text>
</comment>
<comment type="subcellular location">
    <subcellularLocation>
        <location evidence="1">Cytoplasm</location>
    </subcellularLocation>
</comment>
<comment type="similarity">
    <text evidence="1">Belongs to the polyribonucleotide nucleotidyltransferase family.</text>
</comment>
<gene>
    <name evidence="1" type="primary">pnp</name>
    <name type="ordered locus">VC0395_A0178</name>
    <name type="ordered locus">VC395_0664</name>
</gene>
<evidence type="ECO:0000255" key="1">
    <source>
        <dbReference type="HAMAP-Rule" id="MF_01595"/>
    </source>
</evidence>
<proteinExistence type="inferred from homology"/>
<name>PNP_VIBC3</name>
<organism>
    <name type="scientific">Vibrio cholerae serotype O1 (strain ATCC 39541 / Classical Ogawa 395 / O395)</name>
    <dbReference type="NCBI Taxonomy" id="345073"/>
    <lineage>
        <taxon>Bacteria</taxon>
        <taxon>Pseudomonadati</taxon>
        <taxon>Pseudomonadota</taxon>
        <taxon>Gammaproteobacteria</taxon>
        <taxon>Vibrionales</taxon>
        <taxon>Vibrionaceae</taxon>
        <taxon>Vibrio</taxon>
    </lineage>
</organism>
<protein>
    <recommendedName>
        <fullName evidence="1">Polyribonucleotide nucleotidyltransferase</fullName>
        <ecNumber evidence="1">2.7.7.8</ecNumber>
    </recommendedName>
    <alternativeName>
        <fullName evidence="1">Polynucleotide phosphorylase</fullName>
        <shortName evidence="1">PNPase</shortName>
    </alternativeName>
</protein>
<keyword id="KW-0963">Cytoplasm</keyword>
<keyword id="KW-0460">Magnesium</keyword>
<keyword id="KW-0479">Metal-binding</keyword>
<keyword id="KW-0548">Nucleotidyltransferase</keyword>
<keyword id="KW-0694">RNA-binding</keyword>
<keyword id="KW-0808">Transferase</keyword>